<feature type="signal peptide" evidence="1">
    <location>
        <begin position="1"/>
        <end position="29"/>
    </location>
</feature>
<feature type="chain" id="PRO_0000033764" description="Latency-associated peptide" evidence="1">
    <location>
        <begin position="30"/>
        <end position="278"/>
    </location>
</feature>
<feature type="chain" id="PRO_0000033765" description="Transforming growth factor beta-1" evidence="1">
    <location>
        <begin position="279"/>
        <end position="390"/>
    </location>
</feature>
<feature type="region of interest" description="Straightjacket domain" evidence="3">
    <location>
        <begin position="30"/>
        <end position="74"/>
    </location>
</feature>
<feature type="region of interest" description="Arm domain" evidence="3">
    <location>
        <begin position="75"/>
        <end position="271"/>
    </location>
</feature>
<feature type="region of interest" description="Bowtie tail" evidence="1">
    <location>
        <begin position="226"/>
        <end position="252"/>
    </location>
</feature>
<feature type="short sequence motif" description="Cell attachment site" evidence="4">
    <location>
        <begin position="244"/>
        <end position="246"/>
    </location>
</feature>
<feature type="site" description="Cleavage; by FURIN" evidence="1">
    <location>
        <begin position="278"/>
        <end position="279"/>
    </location>
</feature>
<feature type="glycosylation site" description="N-linked (GlcNAc...) asparagine" evidence="4">
    <location>
        <position position="82"/>
    </location>
</feature>
<feature type="glycosylation site" description="N-linked (GlcNAc...) asparagine" evidence="4">
    <location>
        <position position="136"/>
    </location>
</feature>
<feature type="glycosylation site" description="N-linked (GlcNAc...) asparagine" evidence="4">
    <location>
        <position position="176"/>
    </location>
</feature>
<feature type="disulfide bond" description="Interchain (with C-1359 or C-1384 in LTBP1); in inactive form" evidence="3">
    <location>
        <position position="33"/>
    </location>
</feature>
<feature type="disulfide bond" description="Interchain (with C-225)" evidence="1">
    <location>
        <position position="223"/>
    </location>
</feature>
<feature type="disulfide bond" description="Interchain (with C-223)" evidence="1">
    <location>
        <position position="225"/>
    </location>
</feature>
<feature type="disulfide bond" evidence="1">
    <location>
        <begin position="285"/>
        <end position="294"/>
    </location>
</feature>
<feature type="disulfide bond" evidence="1">
    <location>
        <begin position="293"/>
        <end position="356"/>
    </location>
</feature>
<feature type="disulfide bond" evidence="1">
    <location>
        <begin position="322"/>
        <end position="387"/>
    </location>
</feature>
<feature type="disulfide bond" evidence="1">
    <location>
        <begin position="326"/>
        <end position="389"/>
    </location>
</feature>
<feature type="disulfide bond" description="Interchain" evidence="1">
    <location>
        <position position="355"/>
    </location>
</feature>
<feature type="sequence conflict" description="In Ref. 2; AAD49431." evidence="5" ref="2">
    <original>T</original>
    <variation>A</variation>
    <location>
        <position position="137"/>
    </location>
</feature>
<feature type="sequence conflict" description="In Ref. 2; AAD49431." evidence="5" ref="2">
    <original>F</original>
    <variation>L</variation>
    <location>
        <position position="217"/>
    </location>
</feature>
<feature type="sequence conflict" description="In Ref. 2; AAD49431." evidence="5" ref="2">
    <original>S</original>
    <variation>P</variation>
    <location>
        <position position="224"/>
    </location>
</feature>
<feature type="sequence conflict" description="In Ref. 2; AAD49431." evidence="5" ref="2">
    <original>F</original>
    <variation>S</variation>
    <location>
        <position position="286"/>
    </location>
</feature>
<evidence type="ECO:0000250" key="1">
    <source>
        <dbReference type="UniProtKB" id="P01137"/>
    </source>
</evidence>
<evidence type="ECO:0000250" key="2">
    <source>
        <dbReference type="UniProtKB" id="P04202"/>
    </source>
</evidence>
<evidence type="ECO:0000250" key="3">
    <source>
        <dbReference type="UniProtKB" id="P07200"/>
    </source>
</evidence>
<evidence type="ECO:0000255" key="4"/>
<evidence type="ECO:0000305" key="5"/>
<keyword id="KW-0165">Cleavage on pair of basic residues</keyword>
<keyword id="KW-1015">Disulfide bond</keyword>
<keyword id="KW-0272">Extracellular matrix</keyword>
<keyword id="KW-0325">Glycoprotein</keyword>
<keyword id="KW-0339">Growth factor</keyword>
<keyword id="KW-0497">Mitogen</keyword>
<keyword id="KW-1185">Reference proteome</keyword>
<keyword id="KW-0964">Secreted</keyword>
<keyword id="KW-0732">Signal</keyword>
<protein>
    <recommendedName>
        <fullName>Transforming growth factor beta-1 proprotein</fullName>
    </recommendedName>
    <component>
        <recommendedName>
            <fullName>Latency-associated peptide</fullName>
            <shortName>LAP</shortName>
        </recommendedName>
    </component>
    <component>
        <recommendedName>
            <fullName>Transforming growth factor beta-1</fullName>
            <shortName>TGF-beta-1</shortName>
        </recommendedName>
    </component>
</protein>
<dbReference type="EMBL" id="X99438">
    <property type="protein sequence ID" value="CAA67801.1"/>
    <property type="molecule type" value="mRNA"/>
</dbReference>
<dbReference type="EMBL" id="AF175709">
    <property type="protein sequence ID" value="AAD49431.1"/>
    <property type="molecule type" value="mRNA"/>
</dbReference>
<dbReference type="RefSeq" id="NP_001075318.1">
    <property type="nucleotide sequence ID" value="NM_001081849.1"/>
</dbReference>
<dbReference type="SMR" id="O19011"/>
<dbReference type="FunCoup" id="O19011">
    <property type="interactions" value="743"/>
</dbReference>
<dbReference type="STRING" id="9796.ENSECAP00000009480"/>
<dbReference type="GlyCosmos" id="O19011">
    <property type="glycosylation" value="3 sites, No reported glycans"/>
</dbReference>
<dbReference type="PaxDb" id="9796-ENSECAP00000009480"/>
<dbReference type="GeneID" id="100033900"/>
<dbReference type="KEGG" id="ecb:100033900"/>
<dbReference type="CTD" id="7040"/>
<dbReference type="HOGENOM" id="CLU_039840_0_0_1"/>
<dbReference type="InParanoid" id="O19011"/>
<dbReference type="OMA" id="SHNCCLK"/>
<dbReference type="OrthoDB" id="8863549at2759"/>
<dbReference type="TreeFam" id="TF318514"/>
<dbReference type="Proteomes" id="UP000002281">
    <property type="component" value="Chromosome 10"/>
</dbReference>
<dbReference type="Bgee" id="ENSECAG00000011671">
    <property type="expression patterns" value="Expressed in leukocyte and 22 other cell types or tissues"/>
</dbReference>
<dbReference type="ExpressionAtlas" id="O19011">
    <property type="expression patterns" value="baseline"/>
</dbReference>
<dbReference type="GO" id="GO:0072562">
    <property type="term" value="C:blood microparticle"/>
    <property type="evidence" value="ECO:0000250"/>
    <property type="project" value="AgBase"/>
</dbReference>
<dbReference type="GO" id="GO:0009986">
    <property type="term" value="C:cell surface"/>
    <property type="evidence" value="ECO:0000250"/>
    <property type="project" value="UniProtKB"/>
</dbReference>
<dbReference type="GO" id="GO:0005737">
    <property type="term" value="C:cytoplasm"/>
    <property type="evidence" value="ECO:0000250"/>
    <property type="project" value="UniProtKB"/>
</dbReference>
<dbReference type="GO" id="GO:0005615">
    <property type="term" value="C:extracellular space"/>
    <property type="evidence" value="ECO:0000250"/>
    <property type="project" value="UniProtKB"/>
</dbReference>
<dbReference type="GO" id="GO:0005634">
    <property type="term" value="C:nucleus"/>
    <property type="evidence" value="ECO:0000250"/>
    <property type="project" value="UniProtKB"/>
</dbReference>
<dbReference type="GO" id="GO:0005125">
    <property type="term" value="F:cytokine activity"/>
    <property type="evidence" value="ECO:0000318"/>
    <property type="project" value="GO_Central"/>
</dbReference>
<dbReference type="GO" id="GO:0008083">
    <property type="term" value="F:growth factor activity"/>
    <property type="evidence" value="ECO:0007669"/>
    <property type="project" value="UniProtKB-KW"/>
</dbReference>
<dbReference type="GO" id="GO:0034713">
    <property type="term" value="F:type I transforming growth factor beta receptor binding"/>
    <property type="evidence" value="ECO:0000250"/>
    <property type="project" value="AgBase"/>
</dbReference>
<dbReference type="GO" id="GO:0005114">
    <property type="term" value="F:type II transforming growth factor beta receptor binding"/>
    <property type="evidence" value="ECO:0000250"/>
    <property type="project" value="UniProtKB"/>
</dbReference>
<dbReference type="GO" id="GO:0034714">
    <property type="term" value="F:type III transforming growth factor beta receptor binding"/>
    <property type="evidence" value="ECO:0000250"/>
    <property type="project" value="AgBase"/>
</dbReference>
<dbReference type="GO" id="GO:0006754">
    <property type="term" value="P:ATP biosynthetic process"/>
    <property type="evidence" value="ECO:0000250"/>
    <property type="project" value="UniProtKB"/>
</dbReference>
<dbReference type="GO" id="GO:0045216">
    <property type="term" value="P:cell-cell junction organization"/>
    <property type="evidence" value="ECO:0000250"/>
    <property type="project" value="UniProtKB"/>
</dbReference>
<dbReference type="GO" id="GO:0071560">
    <property type="term" value="P:cellular response to transforming growth factor beta stimulus"/>
    <property type="evidence" value="ECO:0000250"/>
    <property type="project" value="AgBase"/>
</dbReference>
<dbReference type="GO" id="GO:0002062">
    <property type="term" value="P:chondrocyte differentiation"/>
    <property type="evidence" value="ECO:0000250"/>
    <property type="project" value="UniProtKB"/>
</dbReference>
<dbReference type="GO" id="GO:0001837">
    <property type="term" value="P:epithelial to mesenchymal transition"/>
    <property type="evidence" value="ECO:0000250"/>
    <property type="project" value="UniProtKB"/>
</dbReference>
<dbReference type="GO" id="GO:0085029">
    <property type="term" value="P:extracellular matrix assembly"/>
    <property type="evidence" value="ECO:0000250"/>
    <property type="project" value="UniProtKB"/>
</dbReference>
<dbReference type="GO" id="GO:0097191">
    <property type="term" value="P:extrinsic apoptotic signaling pathway"/>
    <property type="evidence" value="ECO:0000250"/>
    <property type="project" value="UniProtKB"/>
</dbReference>
<dbReference type="GO" id="GO:0002244">
    <property type="term" value="P:hematopoietic progenitor cell differentiation"/>
    <property type="evidence" value="ECO:0000250"/>
    <property type="project" value="UniProtKB"/>
</dbReference>
<dbReference type="GO" id="GO:0030214">
    <property type="term" value="P:hyaluronan catabolic process"/>
    <property type="evidence" value="ECO:0000250"/>
    <property type="project" value="UniProtKB"/>
</dbReference>
<dbReference type="GO" id="GO:0031293">
    <property type="term" value="P:membrane protein intracellular domain proteolysis"/>
    <property type="evidence" value="ECO:0000250"/>
    <property type="project" value="UniProtKB"/>
</dbReference>
<dbReference type="GO" id="GO:0043537">
    <property type="term" value="P:negative regulation of blood vessel endothelial cell migration"/>
    <property type="evidence" value="ECO:0000250"/>
    <property type="project" value="UniProtKB"/>
</dbReference>
<dbReference type="GO" id="GO:0045786">
    <property type="term" value="P:negative regulation of cell cycle"/>
    <property type="evidence" value="ECO:0000250"/>
    <property type="project" value="UniProtKB"/>
</dbReference>
<dbReference type="GO" id="GO:0030308">
    <property type="term" value="P:negative regulation of cell growth"/>
    <property type="evidence" value="ECO:0000250"/>
    <property type="project" value="UniProtKB"/>
</dbReference>
<dbReference type="GO" id="GO:0008285">
    <property type="term" value="P:negative regulation of cell population proliferation"/>
    <property type="evidence" value="ECO:0000250"/>
    <property type="project" value="UniProtKB"/>
</dbReference>
<dbReference type="GO" id="GO:2000048">
    <property type="term" value="P:negative regulation of cell-cell adhesion mediated by cadherin"/>
    <property type="evidence" value="ECO:0000250"/>
    <property type="project" value="UniProtKB"/>
</dbReference>
<dbReference type="GO" id="GO:0045892">
    <property type="term" value="P:negative regulation of DNA-templated transcription"/>
    <property type="evidence" value="ECO:0000250"/>
    <property type="project" value="UniProtKB"/>
</dbReference>
<dbReference type="GO" id="GO:0050680">
    <property type="term" value="P:negative regulation of epithelial cell proliferation"/>
    <property type="evidence" value="ECO:0000250"/>
    <property type="project" value="UniProtKB"/>
</dbReference>
<dbReference type="GO" id="GO:0045599">
    <property type="term" value="P:negative regulation of fat cell differentiation"/>
    <property type="evidence" value="ECO:0000250"/>
    <property type="project" value="UniProtKB"/>
</dbReference>
<dbReference type="GO" id="GO:0010629">
    <property type="term" value="P:negative regulation of gene expression"/>
    <property type="evidence" value="ECO:0000250"/>
    <property type="project" value="BHF-UCL"/>
</dbReference>
<dbReference type="GO" id="GO:1900126">
    <property type="term" value="P:negative regulation of hyaluronan biosynthetic process"/>
    <property type="evidence" value="ECO:0000250"/>
    <property type="project" value="UniProtKB"/>
</dbReference>
<dbReference type="GO" id="GO:0010936">
    <property type="term" value="P:negative regulation of macrophage cytokine production"/>
    <property type="evidence" value="ECO:0000250"/>
    <property type="project" value="AgBase"/>
</dbReference>
<dbReference type="GO" id="GO:0045662">
    <property type="term" value="P:negative regulation of myoblast differentiation"/>
    <property type="evidence" value="ECO:0000250"/>
    <property type="project" value="UniProtKB"/>
</dbReference>
<dbReference type="GO" id="GO:0048642">
    <property type="term" value="P:negative regulation of skeletal muscle tissue development"/>
    <property type="evidence" value="ECO:0000250"/>
    <property type="project" value="UniProtKB"/>
</dbReference>
<dbReference type="GO" id="GO:0071895">
    <property type="term" value="P:odontoblast differentiation"/>
    <property type="evidence" value="ECO:0000250"/>
    <property type="project" value="UniProtKB"/>
</dbReference>
<dbReference type="GO" id="GO:0006796">
    <property type="term" value="P:phosphate-containing compound metabolic process"/>
    <property type="evidence" value="ECO:0000250"/>
    <property type="project" value="UniProtKB"/>
</dbReference>
<dbReference type="GO" id="GO:0043536">
    <property type="term" value="P:positive regulation of blood vessel endothelial cell migration"/>
    <property type="evidence" value="ECO:0000250"/>
    <property type="project" value="UniProtKB"/>
</dbReference>
<dbReference type="GO" id="GO:0051781">
    <property type="term" value="P:positive regulation of cell division"/>
    <property type="evidence" value="ECO:0007669"/>
    <property type="project" value="UniProtKB-KW"/>
</dbReference>
<dbReference type="GO" id="GO:0030335">
    <property type="term" value="P:positive regulation of cell migration"/>
    <property type="evidence" value="ECO:0000250"/>
    <property type="project" value="UniProtKB"/>
</dbReference>
<dbReference type="GO" id="GO:0008284">
    <property type="term" value="P:positive regulation of cell population proliferation"/>
    <property type="evidence" value="ECO:0000250"/>
    <property type="project" value="UniProtKB"/>
</dbReference>
<dbReference type="GO" id="GO:0050921">
    <property type="term" value="P:positive regulation of chemotaxis"/>
    <property type="evidence" value="ECO:0000250"/>
    <property type="project" value="UniProtKB"/>
</dbReference>
<dbReference type="GO" id="GO:0032967">
    <property type="term" value="P:positive regulation of collagen biosynthetic process"/>
    <property type="evidence" value="ECO:0000250"/>
    <property type="project" value="UniProtKB"/>
</dbReference>
<dbReference type="GO" id="GO:0045742">
    <property type="term" value="P:positive regulation of epidermal growth factor receptor signaling pathway"/>
    <property type="evidence" value="ECO:0000250"/>
    <property type="project" value="UniProtKB"/>
</dbReference>
<dbReference type="GO" id="GO:0010718">
    <property type="term" value="P:positive regulation of epithelial to mesenchymal transition"/>
    <property type="evidence" value="ECO:0000250"/>
    <property type="project" value="UniProtKB"/>
</dbReference>
<dbReference type="GO" id="GO:0070374">
    <property type="term" value="P:positive regulation of ERK1 and ERK2 cascade"/>
    <property type="evidence" value="ECO:0000250"/>
    <property type="project" value="UniProtKB"/>
</dbReference>
<dbReference type="GO" id="GO:0010763">
    <property type="term" value="P:positive regulation of fibroblast migration"/>
    <property type="evidence" value="ECO:0000250"/>
    <property type="project" value="UniProtKB"/>
</dbReference>
<dbReference type="GO" id="GO:0010628">
    <property type="term" value="P:positive regulation of gene expression"/>
    <property type="evidence" value="ECO:0000250"/>
    <property type="project" value="UniProtKB"/>
</dbReference>
<dbReference type="GO" id="GO:0032740">
    <property type="term" value="P:positive regulation of interleukin-17 production"/>
    <property type="evidence" value="ECO:0000250"/>
    <property type="project" value="UniProtKB"/>
</dbReference>
<dbReference type="GO" id="GO:0048298">
    <property type="term" value="P:positive regulation of isotype switching to IgA isotypes"/>
    <property type="evidence" value="ECO:0000250"/>
    <property type="project" value="AgBase"/>
</dbReference>
<dbReference type="GO" id="GO:0014008">
    <property type="term" value="P:positive regulation of microglia differentiation"/>
    <property type="evidence" value="ECO:0000250"/>
    <property type="project" value="UniProtKB"/>
</dbReference>
<dbReference type="GO" id="GO:0042307">
    <property type="term" value="P:positive regulation of protein import into nucleus"/>
    <property type="evidence" value="ECO:0000250"/>
    <property type="project" value="AgBase"/>
</dbReference>
<dbReference type="GO" id="GO:0051247">
    <property type="term" value="P:positive regulation of protein metabolic process"/>
    <property type="evidence" value="ECO:0000250"/>
    <property type="project" value="UniProtKB"/>
</dbReference>
<dbReference type="GO" id="GO:0050714">
    <property type="term" value="P:positive regulation of protein secretion"/>
    <property type="evidence" value="ECO:0000250"/>
    <property type="project" value="UniProtKB"/>
</dbReference>
<dbReference type="GO" id="GO:0031334">
    <property type="term" value="P:positive regulation of protein-containing complex assembly"/>
    <property type="evidence" value="ECO:0000250"/>
    <property type="project" value="UniProtKB"/>
</dbReference>
<dbReference type="GO" id="GO:0060391">
    <property type="term" value="P:positive regulation of SMAD protein signal transduction"/>
    <property type="evidence" value="ECO:0000250"/>
    <property type="project" value="UniProtKB"/>
</dbReference>
<dbReference type="GO" id="GO:0032930">
    <property type="term" value="P:positive regulation of superoxide anion generation"/>
    <property type="evidence" value="ECO:0000250"/>
    <property type="project" value="UniProtKB"/>
</dbReference>
<dbReference type="GO" id="GO:0045944">
    <property type="term" value="P:positive regulation of transcription by RNA polymerase II"/>
    <property type="evidence" value="ECO:0000250"/>
    <property type="project" value="AgBase"/>
</dbReference>
<dbReference type="GO" id="GO:0032801">
    <property type="term" value="P:receptor catabolic process"/>
    <property type="evidence" value="ECO:0000250"/>
    <property type="project" value="UniProtKB"/>
</dbReference>
<dbReference type="GO" id="GO:0042127">
    <property type="term" value="P:regulation of cell population proliferation"/>
    <property type="evidence" value="ECO:0000318"/>
    <property type="project" value="GO_Central"/>
</dbReference>
<dbReference type="GO" id="GO:0070723">
    <property type="term" value="P:response to cholesterol"/>
    <property type="evidence" value="ECO:0000250"/>
    <property type="project" value="UniProtKB"/>
</dbReference>
<dbReference type="GO" id="GO:0032355">
    <property type="term" value="P:response to estradiol"/>
    <property type="evidence" value="ECO:0000250"/>
    <property type="project" value="UniProtKB"/>
</dbReference>
<dbReference type="GO" id="GO:0032570">
    <property type="term" value="P:response to progesterone"/>
    <property type="evidence" value="ECO:0000250"/>
    <property type="project" value="UniProtKB"/>
</dbReference>
<dbReference type="GO" id="GO:0009611">
    <property type="term" value="P:response to wounding"/>
    <property type="evidence" value="ECO:0000250"/>
    <property type="project" value="AgBase"/>
</dbReference>
<dbReference type="GO" id="GO:0007435">
    <property type="term" value="P:salivary gland morphogenesis"/>
    <property type="evidence" value="ECO:0000250"/>
    <property type="project" value="AgBase"/>
</dbReference>
<dbReference type="GO" id="GO:0007179">
    <property type="term" value="P:transforming growth factor beta receptor signaling pathway"/>
    <property type="evidence" value="ECO:0000250"/>
    <property type="project" value="UniProtKB"/>
</dbReference>
<dbReference type="CDD" id="cd19384">
    <property type="entry name" value="TGF_beta_TGFB1"/>
    <property type="match status" value="1"/>
</dbReference>
<dbReference type="FunFam" id="2.10.90.10:FF:000004">
    <property type="entry name" value="Transforming growth factor beta"/>
    <property type="match status" value="1"/>
</dbReference>
<dbReference type="FunFam" id="2.60.120.970:FF:000010">
    <property type="entry name" value="Transforming growth factor beta"/>
    <property type="match status" value="1"/>
</dbReference>
<dbReference type="Gene3D" id="2.60.120.970">
    <property type="match status" value="1"/>
</dbReference>
<dbReference type="Gene3D" id="2.10.90.10">
    <property type="entry name" value="Cystine-knot cytokines"/>
    <property type="match status" value="1"/>
</dbReference>
<dbReference type="InterPro" id="IPR029034">
    <property type="entry name" value="Cystine-knot_cytokine"/>
</dbReference>
<dbReference type="InterPro" id="IPR001839">
    <property type="entry name" value="TGF-b_C"/>
</dbReference>
<dbReference type="InterPro" id="IPR001111">
    <property type="entry name" value="TGF-b_propeptide"/>
</dbReference>
<dbReference type="InterPro" id="IPR016319">
    <property type="entry name" value="TGF-beta"/>
</dbReference>
<dbReference type="InterPro" id="IPR015615">
    <property type="entry name" value="TGF-beta-rel"/>
</dbReference>
<dbReference type="InterPro" id="IPR003939">
    <property type="entry name" value="TGFb1"/>
</dbReference>
<dbReference type="InterPro" id="IPR017948">
    <property type="entry name" value="TGFb_CS"/>
</dbReference>
<dbReference type="PANTHER" id="PTHR11848">
    <property type="entry name" value="TGF-BETA FAMILY"/>
    <property type="match status" value="1"/>
</dbReference>
<dbReference type="PANTHER" id="PTHR11848:SF125">
    <property type="entry name" value="TRANSFORMING GROWTH FACTOR BETA-1 PROPROTEIN"/>
    <property type="match status" value="1"/>
</dbReference>
<dbReference type="Pfam" id="PF00019">
    <property type="entry name" value="TGF_beta"/>
    <property type="match status" value="1"/>
</dbReference>
<dbReference type="Pfam" id="PF00688">
    <property type="entry name" value="TGFb_propeptide"/>
    <property type="match status" value="1"/>
</dbReference>
<dbReference type="PIRSF" id="PIRSF001787">
    <property type="entry name" value="TGF-beta"/>
    <property type="match status" value="1"/>
</dbReference>
<dbReference type="PRINTS" id="PR01423">
    <property type="entry name" value="TGFBETA"/>
</dbReference>
<dbReference type="PRINTS" id="PR01424">
    <property type="entry name" value="TGFBETA1"/>
</dbReference>
<dbReference type="SMART" id="SM00204">
    <property type="entry name" value="TGFB"/>
    <property type="match status" value="1"/>
</dbReference>
<dbReference type="SUPFAM" id="SSF57501">
    <property type="entry name" value="Cystine-knot cytokines"/>
    <property type="match status" value="1"/>
</dbReference>
<dbReference type="PROSITE" id="PS00250">
    <property type="entry name" value="TGF_BETA_1"/>
    <property type="match status" value="1"/>
</dbReference>
<dbReference type="PROSITE" id="PS51362">
    <property type="entry name" value="TGF_BETA_2"/>
    <property type="match status" value="1"/>
</dbReference>
<organism>
    <name type="scientific">Equus caballus</name>
    <name type="common">Horse</name>
    <dbReference type="NCBI Taxonomy" id="9796"/>
    <lineage>
        <taxon>Eukaryota</taxon>
        <taxon>Metazoa</taxon>
        <taxon>Chordata</taxon>
        <taxon>Craniata</taxon>
        <taxon>Vertebrata</taxon>
        <taxon>Euteleostomi</taxon>
        <taxon>Mammalia</taxon>
        <taxon>Eutheria</taxon>
        <taxon>Laurasiatheria</taxon>
        <taxon>Perissodactyla</taxon>
        <taxon>Equidae</taxon>
        <taxon>Equus</taxon>
    </lineage>
</organism>
<comment type="function">
    <text evidence="1">Transforming growth factor beta-1 proprotein: Precursor of the Latency-associated peptide (LAP) and Transforming growth factor beta-1 (TGF-beta-1) chains, which constitute the regulatory and active subunit of TGF-beta-1, respectively.</text>
</comment>
<comment type="function">
    <molecule>Latency-associated peptide</molecule>
    <text evidence="1">Required to maintain the Transforming growth factor beta-1 (TGF-beta-1) chain in a latent state during storage in extracellular matrix. Associates non-covalently with TGF-beta-1 and regulates its activation via interaction with 'milieu molecules', such as LTBP1, LRRC32/GARP and LRRC33/NRROS, that control activation of TGF-beta-1. Interaction with LRRC33/NRROS regulates activation of TGF-beta-1 in macrophages and microglia. Interaction with LRRC32/GARP controls activation of TGF-beta-1 on the surface of activated regulatory T-cells (Tregs). Interaction with integrins (ITGAV:ITGB6 or ITGAV:ITGB8) results in distortion of the Latency-associated peptide chain and subsequent release of the active TGF-beta-1.</text>
</comment>
<comment type="function">
    <molecule>Transforming growth factor beta-1</molecule>
    <text evidence="1 2">Multifunctional protein that regulates the growth and differentiation of various cell types and is involved in various processes, such as normal development, immune function, microglia function and responses to neurodegeneration (By similarity). Activation into mature form follows different steps: following cleavage of the proprotein in the Golgi apparatus, Latency-associated peptide (LAP) and Transforming growth factor beta-1 (TGF-beta-1) chains remain non-covalently linked rendering TGF-beta-1 inactive during storage in extracellular matrix. At the same time, LAP chain interacts with 'milieu molecules', such as LTBP1, LRRC32/GARP and LRRC33/NRROS that control activation of TGF-beta-1 and maintain it in a latent state during storage in extracellular milieus. TGF-beta-1 is released from LAP by integrins (ITGAV:ITGB6 or ITGAV:ITGB8): integrin-binding to LAP stabilizes an alternative conformation of the LAP bowtie tail and results in distortion of the LAP chain and subsequent release of the active TGF-beta-1. Once activated following release of LAP, TGF-beta-1 acts by binding to TGF-beta receptors (TGFBR1 and TGFBR2), which transduce signal (By similarity). While expressed by many cells types, TGF-beta-1 only has a very localized range of action within cell environment thanks to fine regulation of its activation by Latency-associated peptide chain (LAP) and 'milieu molecules'. Plays an important role in bone remodeling: acts as a potent stimulator of osteoblastic bone formation, causing chemotaxis, proliferation and differentiation in committed osteoblasts. Can promote either T-helper 17 cells (Th17) or regulatory T-cells (Treg) lineage differentiation in a concentration-dependent manner. At high concentrations, leads to FOXP3-mediated suppression of RORC and down-regulation of IL-17 expression, favoring Treg cell development. At low concentrations in concert with IL-6 and IL-21, leads to expression of the IL-17 and IL-23 receptors, favoring differentiation to Th17 cells (By similarity). Stimulates sustained production of collagen through the activation of CREB3L1 by regulated intramembrane proteolysis (RIP). Mediates SMAD2/3 activation by inducing its phosphorylation and subsequent translocation to the nucleus. Positively regulates odontoblastic differentiation in dental papilla cells, via promotion of IPO7-mediated translocation of phosphorylated SMAD2 to the nucleus and subsequent transcription of target genes (By similarity). Can induce epithelial-to-mesenchymal transition (EMT) and cell migration in various cell types (By similarity).</text>
</comment>
<comment type="subunit">
    <text evidence="1 2">Homodimer; disulfide-linked. Interacts with the serine proteases, HTRA1 and HTRA3: the interaction with either inhibits TGFB1-mediated signaling and the HTRA protease activity is required for this inhibition. May interact with THSD4; this interaction may lead to sequestration by FBN1 microfibril assembly and attenuation of TGFB signaling. Interacts with CD109, DPT and ASPN. Interacts with EFEMP2. Interacts with TSKU; the interaction contributes to regulation of the hair cycle. Interacts with TGFBR3 (By similarity).</text>
</comment>
<comment type="subunit">
    <molecule>Latency-associated peptide</molecule>
    <text evidence="1 2">Homodimer; disulfide-linked. Interacts with transforming growth factor beta-1 (TGF-beta-1) chain; interaction is non-covalent and maintains TGF-beta-1 in a latent state; each latency-associated peptide (LAP) monomer interacts with TGF-beta-1 in the other monomer. Interacts with LTBP1; leading to regulation of TGF-beta-1 activation. Interacts with LRRC32/GARP; leading to regulation of TGF-beta-1 activation on the surface of activated regulatory T-cells (Tregs). Interacts with LRRC33/NRROS; leading to regulation of TGF-beta-1 activation in macrophages and microglia. Interacts (via cell attachment site) with integrins ITGAV and ITGB6 (ITGAV:ITGB6), leading to release of the active TGF-beta-1. Latency-associated peptide: Interacts with NREP; the interaction results in a decrease in TGFB1 autoinduction. Interacts with HSP90AB1; inhibits latent TGFB1 activation.</text>
</comment>
<comment type="subunit">
    <molecule>Transforming growth factor beta-1</molecule>
    <text evidence="1">Homodimer; disulfide-linked. Interacts with TGF-beta receptors (TGFBR1 and TGFBR2), leading to signal transduction.</text>
</comment>
<comment type="subcellular location">
    <molecule>Latency-associated peptide</molecule>
    <subcellularLocation>
        <location evidence="1">Secreted</location>
        <location evidence="1">Extracellular space</location>
        <location evidence="1">Extracellular matrix</location>
    </subcellularLocation>
</comment>
<comment type="subcellular location">
    <molecule>Transforming growth factor beta-1</molecule>
    <subcellularLocation>
        <location evidence="1">Secreted</location>
    </subcellularLocation>
</comment>
<comment type="domain">
    <molecule>Latency-associated peptide</molecule>
    <text evidence="3">The 'straitjacket' and 'arm' domains encircle the Transforming growth factor beta-1 (TGF-beta-1) monomers and are fastened together by strong bonding between Lys-56 and Tyr-103/Tyr-104.</text>
</comment>
<comment type="domain">
    <molecule>Latency-associated peptide</molecule>
    <text evidence="1">The cell attachment site motif mediates binding to integrins (ITGAV:ITGB6 or ITGAV:ITGB8). The motif locates to a long loop in the arm domain called the bowtie tail. Integrin-binding stabilizes an alternative conformation of the bowtie tail. Activation by integrin requires force application by the actin cytoskeleton, which is resisted by the 'milieu molecules' (such as LTBP1, LRRC32/GARP and/or LRRC33/NRROS), resulting in distortion of the prodomain and release of the active TGF-beta-1.</text>
</comment>
<comment type="PTM">
    <text evidence="1">Transforming growth factor beta-1 proprotein: The precursor proprotein is cleaved in the Golgi apparatus by FURIN to form Transforming growth factor beta-1 (TGF-beta-1) and Latency-associated peptide (LAP) chains, which remain non-covalently linked, rendering TGF-beta-1 inactive.</text>
</comment>
<comment type="PTM">
    <molecule>Latency-associated peptide</molecule>
    <text evidence="1">N-glycosylated. Deglycosylation leads to activation of Transforming growth factor beta-1 (TGF-beta-1); mechanisms triggering deglycosylation-driven activation of TGF-beta-1 are however unclear.</text>
</comment>
<comment type="similarity">
    <text evidence="5">Belongs to the TGF-beta family.</text>
</comment>
<sequence length="390" mass="43975">MPPSGLRLLPLLLPLLWLLVLTPGRPAAGLSTCKTIDMELVKRKRIEAIRGQILSKLRLASPPSQGEVPPGPLPEAVLALYNSTRAQVAGESAETEPEPEADYYAKEVTRVLMVEKENEIYKTVETGSHSIYMFFNTSELRAAVPDPMLLSRAELRLLRLKLSVEQHVELYQKYSNNSWRYLSNRLLTPSDSPEWLSFDVTGVVRQWLSQGGAMEGFRLSAHCSCDSKDNTLRVGINGFSSSRRGDLATIDGMNRPFLLLMATPLERAQQLHSSRHRRALDTNYCFSSTEKNCCVRQLYIDFRKDLGWKWIHEPKGYHANFCLGPCPYIWSLDTQYSKVLALYNQHNPGASAAPCCVPQVLEPLPIVYYVGRKPKVEQLSNMIVRSCKCS</sequence>
<proteinExistence type="evidence at transcript level"/>
<gene>
    <name type="primary">TGFB1</name>
</gene>
<accession>O19011</accession>
<accession>Q9TUM8</accession>
<reference key="1">
    <citation type="journal article" date="1997" name="DNA Seq.">
        <title>Cloning and sequencing of equine transforming growth factor-beta 1 (TGF beta-1) cDNA.</title>
        <authorList>
            <person name="Penha-Goncalves M.N."/>
            <person name="Onions D.E."/>
            <person name="Nicolson L."/>
        </authorList>
    </citation>
    <scope>NUCLEOTIDE SEQUENCE [MRNA]</scope>
    <source>
        <tissue>Lymph node</tissue>
    </source>
</reference>
<reference key="2">
    <citation type="submission" date="1999-08" db="EMBL/GenBank/DDBJ databases">
        <title>Molecular cloning of equine transforming growth factor beta 1 reveals a divergent nucleotide structure that encodes a novel bioactive peptide among mammalian species.</title>
        <authorList>
            <person name="Nixon A.J."/>
            <person name="Brower-Toland B.T."/>
            <person name="Sandell L.J."/>
        </authorList>
    </citation>
    <scope>NUCLEOTIDE SEQUENCE [MRNA]</scope>
</reference>
<name>TGFB1_HORSE</name>